<sequence>MEDFVRQCFNPIIVELAEKAMKEYGEDPKIETNKFAAICTHLEVCFMYSDFHFIDERGESIIVESGDPNALLKHRFEIIEGRDRTMAWTVVNSICNTTGVEKPKFLPDLYDYKENRFVEIGVTRREVHIYYLEKANKIKSEKTHIHIFSFTGEEMATKADYTLDEESRARIKTRLFTIRQEMASRGLWDSFRQSERGEETIEERFEITGTMRRLADQSLPPNFSSLENFRAYVDGFEPNGCIEGKLSQMSKEVNARIEPFLKTTPRPLRLPDGPPCFQRSKFLLMDALKLSIEDPSHEGEGIPLYDAIKCMKTFFGWKEPNIVKPHEKGINPNYLLAWKQVLAELQDIENEEKIPKTKNMKKTSQLKWALGENMAPEKVDFEDCKDVSDLKQYDSDEPEPRSLASWIQSEFNKACELTDSSWIELDEIGEDVAPIEHIASMRRNYFTAEVSHCRATEYIMKGVYINTALLNASCAAMDDFQLIPMISKCRTKEGRRKTNLYGFIIKGRSHLRNDTDVVNFVSMEFSLTDPRLEPHKWEKYCVLEIGDMLLRTAIGQVSRPMFLYVRTNGTSKIKMKWGMEMRRCLLQSLQQIESMIEAESSVKEKDMTKEFFENKSETWPIGESPEGVEEGSIGKVCRTLLAKSVFNSLYASPQLEGFSAESRKLLLIVQALRDNLEPGTFDLGGLYEAIEECLINDPWVLLNASWFNSFLTHALK</sequence>
<comment type="function">
    <text evidence="2">Plays an essential role in viral RNA transcription and replication by forming the heterotrimeric polymerase complex together with PB1 and PB2 subunits. The complex transcribes viral mRNAs by using a unique mechanism called cap-snatching. It consists in the hijacking and cleavage of host capped pre-mRNAs. These short capped RNAs are then used as primers for viral mRNAs. The PB2 subunit is responsible for the binding of the 5' cap of cellular pre-mRNAs which are subsequently cleaved after 10-13 nucleotides by the PA subunit that carries the endonuclease activity.</text>
</comment>
<comment type="cofactor">
    <cofactor evidence="2">
        <name>Mn(2+)</name>
        <dbReference type="ChEBI" id="CHEBI:29035"/>
    </cofactor>
    <text evidence="2">Binds 2 manganese ions per subunit.</text>
</comment>
<comment type="subunit">
    <text evidence="1 2">Influenza RNA polymerase is composed of three subunits: PB1, PB2 and PA. Interacts (via C-terminus) with PB1 (via N-terminus).</text>
</comment>
<comment type="subcellular location">
    <subcellularLocation>
        <location evidence="2">Host cytoplasm</location>
    </subcellularLocation>
    <subcellularLocation>
        <location evidence="2">Host nucleus</location>
    </subcellularLocation>
    <text evidence="1 2">PB1 and PA are transported in the host nucleus as a complex.</text>
</comment>
<comment type="alternative products">
    <event type="ribosomal frameshifting"/>
    <isoform>
        <id>Q0A2Q7-1</id>
        <name>PA</name>
        <sequence type="displayed"/>
    </isoform>
    <isoform>
        <id>P0CK77-1</id>
        <name>PA-X</name>
        <sequence type="external"/>
    </isoform>
</comment>
<comment type="PTM">
    <text evidence="1 2">Phosphorylated on serines and threonines by host kinases, including human casein kinase II.</text>
</comment>
<comment type="similarity">
    <text evidence="2">Belongs to the influenza viruses PA family.</text>
</comment>
<reference key="1">
    <citation type="journal article" date="2006" name="Science">
        <title>Large-scale sequence analysis of avian influenza isolates.</title>
        <authorList>
            <person name="Obenauer J.C."/>
            <person name="Denson J."/>
            <person name="Mehta P.K."/>
            <person name="Su X."/>
            <person name="Mukatira S."/>
            <person name="Finkelstein D.B."/>
            <person name="Xu X."/>
            <person name="Wang J."/>
            <person name="Ma J."/>
            <person name="Fan Y."/>
            <person name="Rakestraw K.M."/>
            <person name="Webster R.G."/>
            <person name="Hoffmann E."/>
            <person name="Krauss S."/>
            <person name="Zheng J."/>
            <person name="Zhang Z."/>
            <person name="Naeve C.W."/>
        </authorList>
    </citation>
    <scope>NUCLEOTIDE SEQUENCE [GENOMIC RNA]</scope>
</reference>
<evidence type="ECO:0000250" key="1">
    <source>
        <dbReference type="UniProtKB" id="P03433"/>
    </source>
</evidence>
<evidence type="ECO:0000255" key="2">
    <source>
        <dbReference type="HAMAP-Rule" id="MF_04063"/>
    </source>
</evidence>
<accession>Q0A2Q7</accession>
<name>PA_I85A3</name>
<proteinExistence type="inferred from homology"/>
<organism>
    <name type="scientific">Influenza A virus (strain A/Chicken/Victoria/1/1985 H7N7)</name>
    <dbReference type="NCBI Taxonomy" id="402520"/>
    <lineage>
        <taxon>Viruses</taxon>
        <taxon>Riboviria</taxon>
        <taxon>Orthornavirae</taxon>
        <taxon>Negarnaviricota</taxon>
        <taxon>Polyploviricotina</taxon>
        <taxon>Insthoviricetes</taxon>
        <taxon>Articulavirales</taxon>
        <taxon>Orthomyxoviridae</taxon>
        <taxon>Alphainfluenzavirus</taxon>
        <taxon>Alphainfluenzavirus influenzae</taxon>
        <taxon>Influenza A virus</taxon>
    </lineage>
</organism>
<feature type="chain" id="PRO_0000279241" description="Polymerase acidic protein">
    <location>
        <begin position="1"/>
        <end position="716"/>
    </location>
</feature>
<feature type="short sequence motif" description="Nuclear localization signal 1 (NLS1)" evidence="1 2">
    <location>
        <begin position="124"/>
        <end position="139"/>
    </location>
</feature>
<feature type="short sequence motif" description="Nuclear localization signal 2 (NLS2)" evidence="1 2">
    <location>
        <begin position="184"/>
        <end position="247"/>
    </location>
</feature>
<feature type="binding site" evidence="2">
    <location>
        <position position="41"/>
    </location>
    <ligand>
        <name>Mn(2+)</name>
        <dbReference type="ChEBI" id="CHEBI:29035"/>
        <label>1</label>
    </ligand>
</feature>
<feature type="binding site" evidence="2">
    <location>
        <position position="80"/>
    </location>
    <ligand>
        <name>Mn(2+)</name>
        <dbReference type="ChEBI" id="CHEBI:29035"/>
        <label>2</label>
    </ligand>
</feature>
<feature type="binding site" evidence="2">
    <location>
        <position position="108"/>
    </location>
    <ligand>
        <name>Mn(2+)</name>
        <dbReference type="ChEBI" id="CHEBI:29035"/>
        <label>1</label>
    </ligand>
</feature>
<feature type="binding site" evidence="2">
    <location>
        <position position="108"/>
    </location>
    <ligand>
        <name>Mn(2+)</name>
        <dbReference type="ChEBI" id="CHEBI:29035"/>
        <label>2</label>
    </ligand>
</feature>
<feature type="binding site" evidence="2">
    <location>
        <position position="119"/>
    </location>
    <ligand>
        <name>Mn(2+)</name>
        <dbReference type="ChEBI" id="CHEBI:29035"/>
        <label>1</label>
    </ligand>
</feature>
<feature type="binding site" evidence="2">
    <location>
        <position position="120"/>
    </location>
    <ligand>
        <name>Mn(2+)</name>
        <dbReference type="ChEBI" id="CHEBI:29035"/>
        <label>1</label>
    </ligand>
</feature>
<organismHost>
    <name type="scientific">Aves</name>
    <dbReference type="NCBI Taxonomy" id="8782"/>
</organismHost>
<organismHost>
    <name type="scientific">Equus caballus</name>
    <name type="common">Horse</name>
    <dbReference type="NCBI Taxonomy" id="9796"/>
</organismHost>
<organismHost>
    <name type="scientific">Homo sapiens</name>
    <name type="common">Human</name>
    <dbReference type="NCBI Taxonomy" id="9606"/>
</organismHost>
<organismHost>
    <name type="scientific">Phocidae</name>
    <name type="common">true seals</name>
    <dbReference type="NCBI Taxonomy" id="9709"/>
</organismHost>
<gene>
    <name evidence="2" type="primary">PA</name>
</gene>
<protein>
    <recommendedName>
        <fullName evidence="2">Polymerase acidic protein</fullName>
        <ecNumber evidence="2">3.1.-.-</ecNumber>
    </recommendedName>
    <alternativeName>
        <fullName evidence="2">RNA-directed RNA polymerase subunit P2</fullName>
    </alternativeName>
</protein>
<dbReference type="EC" id="3.1.-.-" evidence="2"/>
<dbReference type="EMBL" id="CY015024">
    <property type="protein sequence ID" value="ABI85025.1"/>
    <property type="molecule type" value="Genomic_RNA"/>
</dbReference>
<dbReference type="SMR" id="Q0A2Q7"/>
<dbReference type="MEROPS" id="S62.001"/>
<dbReference type="GO" id="GO:0030430">
    <property type="term" value="C:host cell cytoplasm"/>
    <property type="evidence" value="ECO:0007669"/>
    <property type="project" value="UniProtKB-SubCell"/>
</dbReference>
<dbReference type="GO" id="GO:0042025">
    <property type="term" value="C:host cell nucleus"/>
    <property type="evidence" value="ECO:0007669"/>
    <property type="project" value="UniProtKB-SubCell"/>
</dbReference>
<dbReference type="GO" id="GO:0004519">
    <property type="term" value="F:endonuclease activity"/>
    <property type="evidence" value="ECO:0007669"/>
    <property type="project" value="UniProtKB-KW"/>
</dbReference>
<dbReference type="GO" id="GO:0046872">
    <property type="term" value="F:metal ion binding"/>
    <property type="evidence" value="ECO:0007669"/>
    <property type="project" value="UniProtKB-KW"/>
</dbReference>
<dbReference type="GO" id="GO:0003723">
    <property type="term" value="F:RNA binding"/>
    <property type="evidence" value="ECO:0007669"/>
    <property type="project" value="UniProtKB-UniRule"/>
</dbReference>
<dbReference type="GO" id="GO:0075526">
    <property type="term" value="P:cap snatching"/>
    <property type="evidence" value="ECO:0007669"/>
    <property type="project" value="UniProtKB-UniRule"/>
</dbReference>
<dbReference type="GO" id="GO:0006351">
    <property type="term" value="P:DNA-templated transcription"/>
    <property type="evidence" value="ECO:0007669"/>
    <property type="project" value="UniProtKB-UniRule"/>
</dbReference>
<dbReference type="GO" id="GO:0039657">
    <property type="term" value="P:symbiont-mediated suppression of host gene expression"/>
    <property type="evidence" value="ECO:0007669"/>
    <property type="project" value="UniProtKB-KW"/>
</dbReference>
<dbReference type="GO" id="GO:0039523">
    <property type="term" value="P:symbiont-mediated suppression of host mRNA transcription via inhibition of RNA polymerase II activity"/>
    <property type="evidence" value="ECO:0007669"/>
    <property type="project" value="UniProtKB-UniRule"/>
</dbReference>
<dbReference type="GO" id="GO:0039694">
    <property type="term" value="P:viral RNA genome replication"/>
    <property type="evidence" value="ECO:0007669"/>
    <property type="project" value="InterPro"/>
</dbReference>
<dbReference type="GO" id="GO:0075523">
    <property type="term" value="P:viral translational frameshifting"/>
    <property type="evidence" value="ECO:0007669"/>
    <property type="project" value="UniProtKB-KW"/>
</dbReference>
<dbReference type="FunFam" id="3.40.91.90:FF:000001">
    <property type="entry name" value="Polymerase acidic protein"/>
    <property type="match status" value="1"/>
</dbReference>
<dbReference type="Gene3D" id="3.40.91.90">
    <property type="entry name" value="Influenza RNA-dependent RNA polymerase subunit PA, endonuclease domain"/>
    <property type="match status" value="1"/>
</dbReference>
<dbReference type="HAMAP" id="MF_04063">
    <property type="entry name" value="INFV_PA"/>
    <property type="match status" value="1"/>
</dbReference>
<dbReference type="InterPro" id="IPR037534">
    <property type="entry name" value="INFV_PA"/>
</dbReference>
<dbReference type="InterPro" id="IPR001009">
    <property type="entry name" value="PA/PA-X"/>
</dbReference>
<dbReference type="InterPro" id="IPR038372">
    <property type="entry name" value="PA/PA-X_sf"/>
</dbReference>
<dbReference type="Pfam" id="PF00603">
    <property type="entry name" value="Flu_PA"/>
    <property type="match status" value="1"/>
</dbReference>
<keyword id="KW-1157">Cap snatching</keyword>
<keyword id="KW-0255">Endonuclease</keyword>
<keyword id="KW-1262">Eukaryotic host gene expression shutoff by virus</keyword>
<keyword id="KW-1191">Eukaryotic host transcription shutoff by virus</keyword>
<keyword id="KW-1035">Host cytoplasm</keyword>
<keyword id="KW-1190">Host gene expression shutoff by virus</keyword>
<keyword id="KW-1048">Host nucleus</keyword>
<keyword id="KW-0945">Host-virus interaction</keyword>
<keyword id="KW-0378">Hydrolase</keyword>
<keyword id="KW-1104">Inhibition of host RNA polymerase II by virus</keyword>
<keyword id="KW-0464">Manganese</keyword>
<keyword id="KW-0479">Metal-binding</keyword>
<keyword id="KW-0540">Nuclease</keyword>
<keyword id="KW-0597">Phosphoprotein</keyword>
<keyword id="KW-0688">Ribosomal frameshifting</keyword>